<name>KLH21_BOVIN</name>
<gene>
    <name type="primary">KLHL21</name>
</gene>
<keyword id="KW-0131">Cell cycle</keyword>
<keyword id="KW-0132">Cell division</keyword>
<keyword id="KW-0963">Cytoplasm</keyword>
<keyword id="KW-0206">Cytoskeleton</keyword>
<keyword id="KW-0880">Kelch repeat</keyword>
<keyword id="KW-0498">Mitosis</keyword>
<keyword id="KW-1185">Reference proteome</keyword>
<keyword id="KW-0677">Repeat</keyword>
<keyword id="KW-0833">Ubl conjugation pathway</keyword>
<sequence>MERPAPLAVLPFSDPAHALSLLRGLSQLRAERKFLDVTLEAAGGRDFPAHRAVLAAASPYFRAMFAGQLRESRAERVRLHGVPPDMLQLLLDFSYTGRVAVSGDNAEPLLRAADLLQFPAVKEACGAFLQQQLDLTNCLDMQDFAEAFSCAGLASAAQRFILRHVGELGAEQLERLPLARLLRYLRDDGLCVPKEEAAYQLALRWVRADPPRRAAHWPQLLESVRLPFVRRFYLLAHVEAEPLVARCPPCLRLLREARDFQAARYDRHDRGPCPRMRPRPSTGLAEILVLVGGCDQDCDELVTVDCYNPQTGQWRYLAEFPDHLGGGYSIVALGNDIYVTGGSDGSRLYDCVWRYNSSVNEWTEVAPMLKAREYHSSSVLDGLLYVVAADSTERYDHTTDSWEALQPMTYPMDNCSTTACRGRLYAIGSLAGKETMVMQCYHPDMDLWSLVDCGQLPPWSFAPKTVTLNGLMYFIRDDSAEVDVYNPTKNEWDKIPSMNQVHVGGSLAVLGGKLYVSGGYDNTFELSDVVEAYDPETRAWSVVGRLPEPTFWHGSVSIFRQFMPQTPLGGRGFELDGGSSDMDVGQPRPPQNPAELH</sequence>
<reference key="1">
    <citation type="submission" date="2006-09" db="EMBL/GenBank/DDBJ databases">
        <authorList>
            <consortium name="NIH - Mammalian Gene Collection (MGC) project"/>
        </authorList>
    </citation>
    <scope>NUCLEOTIDE SEQUENCE [LARGE SCALE MRNA]</scope>
    <source>
        <strain>Hereford</strain>
        <tissue>Fetal pons</tissue>
    </source>
</reference>
<proteinExistence type="evidence at transcript level"/>
<dbReference type="EMBL" id="BC123594">
    <property type="protein sequence ID" value="AAI23595.1"/>
    <property type="molecule type" value="mRNA"/>
</dbReference>
<dbReference type="RefSeq" id="NP_001070279.1">
    <property type="nucleotide sequence ID" value="NM_001076811.1"/>
</dbReference>
<dbReference type="SMR" id="Q08DS0"/>
<dbReference type="FunCoup" id="Q08DS0">
    <property type="interactions" value="45"/>
</dbReference>
<dbReference type="STRING" id="9913.ENSBTAP00000010998"/>
<dbReference type="PaxDb" id="9913-ENSBTAP00000010998"/>
<dbReference type="GeneID" id="506632"/>
<dbReference type="KEGG" id="bta:506632"/>
<dbReference type="CTD" id="9903"/>
<dbReference type="eggNOG" id="KOG4441">
    <property type="taxonomic scope" value="Eukaryota"/>
</dbReference>
<dbReference type="InParanoid" id="Q08DS0"/>
<dbReference type="OrthoDB" id="45365at2759"/>
<dbReference type="UniPathway" id="UPA00143"/>
<dbReference type="Proteomes" id="UP000009136">
    <property type="component" value="Unplaced"/>
</dbReference>
<dbReference type="GO" id="GO:0031463">
    <property type="term" value="C:Cul3-RING ubiquitin ligase complex"/>
    <property type="evidence" value="ECO:0000250"/>
    <property type="project" value="UniProtKB"/>
</dbReference>
<dbReference type="GO" id="GO:0005737">
    <property type="term" value="C:cytoplasm"/>
    <property type="evidence" value="ECO:0000318"/>
    <property type="project" value="GO_Central"/>
</dbReference>
<dbReference type="GO" id="GO:0005827">
    <property type="term" value="C:polar microtubule"/>
    <property type="evidence" value="ECO:0000250"/>
    <property type="project" value="UniProtKB"/>
</dbReference>
<dbReference type="GO" id="GO:1990756">
    <property type="term" value="F:ubiquitin-like ligase-substrate adaptor activity"/>
    <property type="evidence" value="ECO:0000318"/>
    <property type="project" value="GO_Central"/>
</dbReference>
<dbReference type="GO" id="GO:0051301">
    <property type="term" value="P:cell division"/>
    <property type="evidence" value="ECO:0007669"/>
    <property type="project" value="UniProtKB-KW"/>
</dbReference>
<dbReference type="GO" id="GO:0035853">
    <property type="term" value="P:chromosome passenger complex localization to spindle midzone"/>
    <property type="evidence" value="ECO:0000250"/>
    <property type="project" value="UniProtKB"/>
</dbReference>
<dbReference type="GO" id="GO:0043161">
    <property type="term" value="P:proteasome-mediated ubiquitin-dependent protein catabolic process"/>
    <property type="evidence" value="ECO:0000318"/>
    <property type="project" value="GO_Central"/>
</dbReference>
<dbReference type="GO" id="GO:0016567">
    <property type="term" value="P:protein ubiquitination"/>
    <property type="evidence" value="ECO:0000250"/>
    <property type="project" value="UniProtKB"/>
</dbReference>
<dbReference type="GO" id="GO:0032465">
    <property type="term" value="P:regulation of cytokinesis"/>
    <property type="evidence" value="ECO:0000250"/>
    <property type="project" value="UniProtKB"/>
</dbReference>
<dbReference type="CDD" id="cd18460">
    <property type="entry name" value="BACK_KLHL21"/>
    <property type="match status" value="1"/>
</dbReference>
<dbReference type="CDD" id="cd18250">
    <property type="entry name" value="BTB_POZ_KLHL21"/>
    <property type="match status" value="1"/>
</dbReference>
<dbReference type="FunFam" id="1.25.40.420:FF:000001">
    <property type="entry name" value="Kelch-like family member 12"/>
    <property type="match status" value="1"/>
</dbReference>
<dbReference type="FunFam" id="3.30.710.10:FF:000001">
    <property type="entry name" value="Kelch-like family member 20"/>
    <property type="match status" value="1"/>
</dbReference>
<dbReference type="FunFam" id="2.120.10.80:FF:000044">
    <property type="entry name" value="Kelch-like family member 21"/>
    <property type="match status" value="1"/>
</dbReference>
<dbReference type="Gene3D" id="1.25.40.420">
    <property type="match status" value="1"/>
</dbReference>
<dbReference type="Gene3D" id="2.120.10.80">
    <property type="entry name" value="Kelch-type beta propeller"/>
    <property type="match status" value="1"/>
</dbReference>
<dbReference type="Gene3D" id="3.30.710.10">
    <property type="entry name" value="Potassium Channel Kv1.1, Chain A"/>
    <property type="match status" value="1"/>
</dbReference>
<dbReference type="InterPro" id="IPR011705">
    <property type="entry name" value="BACK"/>
</dbReference>
<dbReference type="InterPro" id="IPR017096">
    <property type="entry name" value="BTB-kelch_protein"/>
</dbReference>
<dbReference type="InterPro" id="IPR000210">
    <property type="entry name" value="BTB/POZ_dom"/>
</dbReference>
<dbReference type="InterPro" id="IPR030577">
    <property type="entry name" value="BTB/POZ_KLHL21"/>
</dbReference>
<dbReference type="InterPro" id="IPR015915">
    <property type="entry name" value="Kelch-typ_b-propeller"/>
</dbReference>
<dbReference type="InterPro" id="IPR006652">
    <property type="entry name" value="Kelch_1"/>
</dbReference>
<dbReference type="InterPro" id="IPR047069">
    <property type="entry name" value="KLHL21_BACK"/>
</dbReference>
<dbReference type="InterPro" id="IPR011333">
    <property type="entry name" value="SKP1/BTB/POZ_sf"/>
</dbReference>
<dbReference type="PANTHER" id="PTHR24412">
    <property type="entry name" value="KELCH PROTEIN"/>
    <property type="match status" value="1"/>
</dbReference>
<dbReference type="PANTHER" id="PTHR24412:SF255">
    <property type="entry name" value="KELCH-LIKE PROTEIN 21"/>
    <property type="match status" value="1"/>
</dbReference>
<dbReference type="Pfam" id="PF07707">
    <property type="entry name" value="BACK"/>
    <property type="match status" value="1"/>
</dbReference>
<dbReference type="Pfam" id="PF00651">
    <property type="entry name" value="BTB"/>
    <property type="match status" value="1"/>
</dbReference>
<dbReference type="Pfam" id="PF01344">
    <property type="entry name" value="Kelch_1"/>
    <property type="match status" value="2"/>
</dbReference>
<dbReference type="Pfam" id="PF13964">
    <property type="entry name" value="Kelch_6"/>
    <property type="match status" value="1"/>
</dbReference>
<dbReference type="PIRSF" id="PIRSF037037">
    <property type="entry name" value="Kelch-like_protein_gigaxonin"/>
    <property type="match status" value="1"/>
</dbReference>
<dbReference type="SMART" id="SM00875">
    <property type="entry name" value="BACK"/>
    <property type="match status" value="1"/>
</dbReference>
<dbReference type="SMART" id="SM00225">
    <property type="entry name" value="BTB"/>
    <property type="match status" value="1"/>
</dbReference>
<dbReference type="SMART" id="SM00612">
    <property type="entry name" value="Kelch"/>
    <property type="match status" value="5"/>
</dbReference>
<dbReference type="SUPFAM" id="SSF117281">
    <property type="entry name" value="Kelch motif"/>
    <property type="match status" value="1"/>
</dbReference>
<dbReference type="SUPFAM" id="SSF54695">
    <property type="entry name" value="POZ domain"/>
    <property type="match status" value="1"/>
</dbReference>
<dbReference type="PROSITE" id="PS50097">
    <property type="entry name" value="BTB"/>
    <property type="match status" value="1"/>
</dbReference>
<evidence type="ECO:0000250" key="1"/>
<evidence type="ECO:0000255" key="2">
    <source>
        <dbReference type="PROSITE-ProRule" id="PRU00037"/>
    </source>
</evidence>
<evidence type="ECO:0000256" key="3">
    <source>
        <dbReference type="SAM" id="MobiDB-lite"/>
    </source>
</evidence>
<feature type="chain" id="PRO_0000326127" description="Kelch-like protein 21">
    <location>
        <begin position="1"/>
        <end position="597"/>
    </location>
</feature>
<feature type="domain" description="BTB" evidence="2">
    <location>
        <begin position="35"/>
        <end position="103"/>
    </location>
</feature>
<feature type="domain" description="BACK">
    <location>
        <begin position="138"/>
        <end position="239"/>
    </location>
</feature>
<feature type="repeat" description="Kelch 1">
    <location>
        <begin position="287"/>
        <end position="335"/>
    </location>
</feature>
<feature type="repeat" description="Kelch 2">
    <location>
        <begin position="336"/>
        <end position="382"/>
    </location>
</feature>
<feature type="repeat" description="Kelch 3">
    <location>
        <begin position="384"/>
        <end position="422"/>
    </location>
</feature>
<feature type="repeat" description="Kelch 4">
    <location>
        <begin position="424"/>
        <end position="463"/>
    </location>
</feature>
<feature type="repeat" description="Kelch 5">
    <location>
        <begin position="464"/>
        <end position="512"/>
    </location>
</feature>
<feature type="repeat" description="Kelch 6">
    <location>
        <begin position="513"/>
        <end position="560"/>
    </location>
</feature>
<feature type="region of interest" description="Disordered" evidence="3">
    <location>
        <begin position="570"/>
        <end position="597"/>
    </location>
</feature>
<feature type="compositionally biased region" description="Pro residues" evidence="3">
    <location>
        <begin position="587"/>
        <end position="597"/>
    </location>
</feature>
<accession>Q08DS0</accession>
<protein>
    <recommendedName>
        <fullName>Kelch-like protein 21</fullName>
    </recommendedName>
</protein>
<comment type="function">
    <text evidence="1">Substrate-specific adapter of a BCR (BTB-CUL3-RBX1) E3 ubiquitin-protein ligase complex required for efficient chromosome alignment and cytokinesis. The BCR(KLHL21) E3 ubiquitin ligase complex regulates localization of the chromosomal passenger complex (CPC) from chromosomes to the spindle midzone in anaphase and mediates the ubiquitination of AURKB. Ubiquitination of AURKB by BCR(KLHL21) E3 ubiquitin ligase complex may not lead to its degradation by the proteasome (By similarity).</text>
</comment>
<comment type="pathway">
    <text>Protein modification; protein ubiquitination.</text>
</comment>
<comment type="subunit">
    <text evidence="1">Component of the BCR(KLHL21) E3 ubiquitin ligase complex, at least composed of CUL3, KLHL21 and RBX1.</text>
</comment>
<comment type="subcellular location">
    <subcellularLocation>
        <location evidence="1">Cytoplasm</location>
        <location evidence="1">Cytoskeleton</location>
        <location evidence="1">Spindle</location>
    </subcellularLocation>
    <text evidence="1">Localizes to the spindle midzone and targets CUL3 to this region.</text>
</comment>
<organism>
    <name type="scientific">Bos taurus</name>
    <name type="common">Bovine</name>
    <dbReference type="NCBI Taxonomy" id="9913"/>
    <lineage>
        <taxon>Eukaryota</taxon>
        <taxon>Metazoa</taxon>
        <taxon>Chordata</taxon>
        <taxon>Craniata</taxon>
        <taxon>Vertebrata</taxon>
        <taxon>Euteleostomi</taxon>
        <taxon>Mammalia</taxon>
        <taxon>Eutheria</taxon>
        <taxon>Laurasiatheria</taxon>
        <taxon>Artiodactyla</taxon>
        <taxon>Ruminantia</taxon>
        <taxon>Pecora</taxon>
        <taxon>Bovidae</taxon>
        <taxon>Bovinae</taxon>
        <taxon>Bos</taxon>
    </lineage>
</organism>